<reference key="1">
    <citation type="journal article" date="1999" name="Genetics">
        <title>Divergence of the hyperthermophilic archaea Pyrococcus furiosus and P. horikoshii inferred from complete genomic sequences.</title>
        <authorList>
            <person name="Maeder D.L."/>
            <person name="Weiss R.B."/>
            <person name="Dunn D.M."/>
            <person name="Cherry J.L."/>
            <person name="Gonzalez J.M."/>
            <person name="DiRuggiero J."/>
            <person name="Robb F.T."/>
        </authorList>
    </citation>
    <scope>NUCLEOTIDE SEQUENCE [LARGE SCALE GENOMIC DNA]</scope>
    <source>
        <strain>ATCC 43587 / DSM 3638 / JCM 8422 / Vc1</strain>
    </source>
</reference>
<proteinExistence type="predicted"/>
<evidence type="ECO:0000255" key="1">
    <source>
        <dbReference type="PROSITE-ProRule" id="PRU00319"/>
    </source>
</evidence>
<name>REG8_PYRFU</name>
<dbReference type="EMBL" id="AE009950">
    <property type="protein sequence ID" value="AAL81858.1"/>
    <property type="molecule type" value="Genomic_DNA"/>
</dbReference>
<dbReference type="RefSeq" id="WP_011012880.1">
    <property type="nucleotide sequence ID" value="NZ_CP023154.1"/>
</dbReference>
<dbReference type="SMR" id="Q8U067"/>
<dbReference type="STRING" id="186497.PF1734"/>
<dbReference type="PaxDb" id="186497-PF1734"/>
<dbReference type="KEGG" id="pfu:PF1734"/>
<dbReference type="PATRIC" id="fig|186497.12.peg.1802"/>
<dbReference type="eggNOG" id="arCOG01580">
    <property type="taxonomic scope" value="Archaea"/>
</dbReference>
<dbReference type="HOGENOM" id="CLU_091233_5_4_2"/>
<dbReference type="OrthoDB" id="6995at2157"/>
<dbReference type="PhylomeDB" id="Q8U067"/>
<dbReference type="Proteomes" id="UP000001013">
    <property type="component" value="Chromosome"/>
</dbReference>
<dbReference type="GO" id="GO:0005829">
    <property type="term" value="C:cytosol"/>
    <property type="evidence" value="ECO:0007669"/>
    <property type="project" value="TreeGrafter"/>
</dbReference>
<dbReference type="GO" id="GO:0043565">
    <property type="term" value="F:sequence-specific DNA binding"/>
    <property type="evidence" value="ECO:0007669"/>
    <property type="project" value="InterPro"/>
</dbReference>
<dbReference type="GO" id="GO:0043200">
    <property type="term" value="P:response to amino acid"/>
    <property type="evidence" value="ECO:0007669"/>
    <property type="project" value="TreeGrafter"/>
</dbReference>
<dbReference type="CDD" id="cd00090">
    <property type="entry name" value="HTH_ARSR"/>
    <property type="match status" value="1"/>
</dbReference>
<dbReference type="Gene3D" id="3.30.70.920">
    <property type="match status" value="1"/>
</dbReference>
<dbReference type="Gene3D" id="1.10.10.10">
    <property type="entry name" value="Winged helix-like DNA-binding domain superfamily/Winged helix DNA-binding domain"/>
    <property type="match status" value="1"/>
</dbReference>
<dbReference type="InterPro" id="IPR011991">
    <property type="entry name" value="ArsR-like_HTH"/>
</dbReference>
<dbReference type="InterPro" id="IPR000485">
    <property type="entry name" value="AsnC-type_HTH_dom"/>
</dbReference>
<dbReference type="InterPro" id="IPR011008">
    <property type="entry name" value="Dimeric_a/b-barrel"/>
</dbReference>
<dbReference type="InterPro" id="IPR019888">
    <property type="entry name" value="Tscrpt_reg_AsnC-like"/>
</dbReference>
<dbReference type="InterPro" id="IPR019887">
    <property type="entry name" value="Tscrpt_reg_AsnC/Lrp_C"/>
</dbReference>
<dbReference type="InterPro" id="IPR036388">
    <property type="entry name" value="WH-like_DNA-bd_sf"/>
</dbReference>
<dbReference type="InterPro" id="IPR036390">
    <property type="entry name" value="WH_DNA-bd_sf"/>
</dbReference>
<dbReference type="PANTHER" id="PTHR30154">
    <property type="entry name" value="LEUCINE-RESPONSIVE REGULATORY PROTEIN"/>
    <property type="match status" value="1"/>
</dbReference>
<dbReference type="PANTHER" id="PTHR30154:SF34">
    <property type="entry name" value="TRANSCRIPTIONAL REGULATOR AZLB"/>
    <property type="match status" value="1"/>
</dbReference>
<dbReference type="Pfam" id="PF01037">
    <property type="entry name" value="AsnC_trans_reg"/>
    <property type="match status" value="1"/>
</dbReference>
<dbReference type="Pfam" id="PF13412">
    <property type="entry name" value="HTH_24"/>
    <property type="match status" value="1"/>
</dbReference>
<dbReference type="PRINTS" id="PR00033">
    <property type="entry name" value="HTHASNC"/>
</dbReference>
<dbReference type="SMART" id="SM00344">
    <property type="entry name" value="HTH_ASNC"/>
    <property type="match status" value="1"/>
</dbReference>
<dbReference type="SUPFAM" id="SSF54909">
    <property type="entry name" value="Dimeric alpha+beta barrel"/>
    <property type="match status" value="1"/>
</dbReference>
<dbReference type="SUPFAM" id="SSF46785">
    <property type="entry name" value="Winged helix' DNA-binding domain"/>
    <property type="match status" value="1"/>
</dbReference>
<dbReference type="PROSITE" id="PS50956">
    <property type="entry name" value="HTH_ASNC_2"/>
    <property type="match status" value="1"/>
</dbReference>
<feature type="chain" id="PRO_0000111774" description="Uncharacterized HTH-type transcriptional regulator PF1734">
    <location>
        <begin position="1"/>
        <end position="148"/>
    </location>
</feature>
<feature type="domain" description="HTH asnC-type" evidence="1">
    <location>
        <begin position="3"/>
        <end position="64"/>
    </location>
</feature>
<feature type="DNA-binding region" description="H-T-H motif" evidence="1">
    <location>
        <begin position="22"/>
        <end position="41"/>
    </location>
</feature>
<protein>
    <recommendedName>
        <fullName>Uncharacterized HTH-type transcriptional regulator PF1734</fullName>
    </recommendedName>
</protein>
<sequence length="148" mass="17075">MEIDDLDRKILSLLIEDSRLSYREIAKKLNVAVGTIYNRIKKLEDMGVIQGFTVKLNYEKLGYELTAIIGIKAQGKKIREIERIIARDKHVTCVYDVTGEYDIIVIAKFRSREDMNRFVKSVLSVDGVEKTNTHVALEIVKEDFRLEP</sequence>
<keyword id="KW-0238">DNA-binding</keyword>
<keyword id="KW-1185">Reference proteome</keyword>
<keyword id="KW-0804">Transcription</keyword>
<keyword id="KW-0805">Transcription regulation</keyword>
<gene>
    <name type="ordered locus">PF1734</name>
</gene>
<accession>Q8U067</accession>
<organism>
    <name type="scientific">Pyrococcus furiosus (strain ATCC 43587 / DSM 3638 / JCM 8422 / Vc1)</name>
    <dbReference type="NCBI Taxonomy" id="186497"/>
    <lineage>
        <taxon>Archaea</taxon>
        <taxon>Methanobacteriati</taxon>
        <taxon>Methanobacteriota</taxon>
        <taxon>Thermococci</taxon>
        <taxon>Thermococcales</taxon>
        <taxon>Thermococcaceae</taxon>
        <taxon>Pyrococcus</taxon>
    </lineage>
</organism>